<comment type="function">
    <text evidence="1">Catalyzes the condensation of iminoaspartate with dihydroxyacetone phosphate to form quinolinate.</text>
</comment>
<comment type="catalytic activity">
    <reaction evidence="1">
        <text>iminosuccinate + dihydroxyacetone phosphate = quinolinate + phosphate + 2 H2O + H(+)</text>
        <dbReference type="Rhea" id="RHEA:25888"/>
        <dbReference type="ChEBI" id="CHEBI:15377"/>
        <dbReference type="ChEBI" id="CHEBI:15378"/>
        <dbReference type="ChEBI" id="CHEBI:29959"/>
        <dbReference type="ChEBI" id="CHEBI:43474"/>
        <dbReference type="ChEBI" id="CHEBI:57642"/>
        <dbReference type="ChEBI" id="CHEBI:77875"/>
        <dbReference type="EC" id="2.5.1.72"/>
    </reaction>
    <physiologicalReaction direction="left-to-right" evidence="1">
        <dbReference type="Rhea" id="RHEA:25889"/>
    </physiologicalReaction>
</comment>
<comment type="cofactor">
    <cofactor evidence="1">
        <name>[4Fe-4S] cluster</name>
        <dbReference type="ChEBI" id="CHEBI:49883"/>
    </cofactor>
    <text evidence="1">Binds 1 [4Fe-4S] cluster per subunit.</text>
</comment>
<comment type="pathway">
    <text evidence="1">Cofactor biosynthesis; NAD(+) biosynthesis; quinolinate from iminoaspartate: step 1/1.</text>
</comment>
<comment type="subcellular location">
    <subcellularLocation>
        <location evidence="1">Cytoplasm</location>
    </subcellularLocation>
</comment>
<comment type="similarity">
    <text evidence="1">Belongs to the quinolinate synthase family. Type 2 subfamily.</text>
</comment>
<accession>B5YJJ2</accession>
<organism>
    <name type="scientific">Thermodesulfovibrio yellowstonii (strain ATCC 51303 / DSM 11347 / YP87)</name>
    <dbReference type="NCBI Taxonomy" id="289376"/>
    <lineage>
        <taxon>Bacteria</taxon>
        <taxon>Pseudomonadati</taxon>
        <taxon>Nitrospirota</taxon>
        <taxon>Thermodesulfovibrionia</taxon>
        <taxon>Thermodesulfovibrionales</taxon>
        <taxon>Thermodesulfovibrionaceae</taxon>
        <taxon>Thermodesulfovibrio</taxon>
    </lineage>
</organism>
<proteinExistence type="inferred from homology"/>
<reference key="1">
    <citation type="submission" date="2008-08" db="EMBL/GenBank/DDBJ databases">
        <title>The complete genome sequence of Thermodesulfovibrio yellowstonii strain ATCC 51303 / DSM 11347 / YP87.</title>
        <authorList>
            <person name="Dodson R.J."/>
            <person name="Durkin A.S."/>
            <person name="Wu M."/>
            <person name="Eisen J."/>
            <person name="Sutton G."/>
        </authorList>
    </citation>
    <scope>NUCLEOTIDE SEQUENCE [LARGE SCALE GENOMIC DNA]</scope>
    <source>
        <strain>ATCC 51303 / DSM 11347 / YP87</strain>
    </source>
</reference>
<evidence type="ECO:0000255" key="1">
    <source>
        <dbReference type="HAMAP-Rule" id="MF_00568"/>
    </source>
</evidence>
<dbReference type="EC" id="2.5.1.72" evidence="1"/>
<dbReference type="EMBL" id="CP001147">
    <property type="protein sequence ID" value="ACI22112.1"/>
    <property type="molecule type" value="Genomic_DNA"/>
</dbReference>
<dbReference type="RefSeq" id="WP_012546803.1">
    <property type="nucleotide sequence ID" value="NC_011296.1"/>
</dbReference>
<dbReference type="RefSeq" id="YP_002248407.1">
    <property type="nucleotide sequence ID" value="NC_011296.1"/>
</dbReference>
<dbReference type="SMR" id="B5YJJ2"/>
<dbReference type="FunCoup" id="B5YJJ2">
    <property type="interactions" value="414"/>
</dbReference>
<dbReference type="STRING" id="289376.THEYE_A0564"/>
<dbReference type="EnsemblBacteria" id="ACI22112">
    <property type="protein sequence ID" value="ACI22112"/>
    <property type="gene ID" value="THEYE_A0564"/>
</dbReference>
<dbReference type="KEGG" id="tye:THEYE_A0564"/>
<dbReference type="PATRIC" id="fig|289376.4.peg.558"/>
<dbReference type="eggNOG" id="COG0379">
    <property type="taxonomic scope" value="Bacteria"/>
</dbReference>
<dbReference type="HOGENOM" id="CLU_047382_0_0_0"/>
<dbReference type="InParanoid" id="B5YJJ2"/>
<dbReference type="OrthoDB" id="9801204at2"/>
<dbReference type="UniPathway" id="UPA00253">
    <property type="reaction ID" value="UER00327"/>
</dbReference>
<dbReference type="Proteomes" id="UP000000718">
    <property type="component" value="Chromosome"/>
</dbReference>
<dbReference type="GO" id="GO:0005829">
    <property type="term" value="C:cytosol"/>
    <property type="evidence" value="ECO:0000318"/>
    <property type="project" value="GO_Central"/>
</dbReference>
<dbReference type="GO" id="GO:0051539">
    <property type="term" value="F:4 iron, 4 sulfur cluster binding"/>
    <property type="evidence" value="ECO:0000318"/>
    <property type="project" value="GO_Central"/>
</dbReference>
<dbReference type="GO" id="GO:0046872">
    <property type="term" value="F:metal ion binding"/>
    <property type="evidence" value="ECO:0007669"/>
    <property type="project" value="UniProtKB-KW"/>
</dbReference>
<dbReference type="GO" id="GO:0008987">
    <property type="term" value="F:quinolinate synthetase A activity"/>
    <property type="evidence" value="ECO:0000318"/>
    <property type="project" value="GO_Central"/>
</dbReference>
<dbReference type="GO" id="GO:0034628">
    <property type="term" value="P:'de novo' NAD biosynthetic process from L-aspartate"/>
    <property type="evidence" value="ECO:0000318"/>
    <property type="project" value="GO_Central"/>
</dbReference>
<dbReference type="FunFam" id="3.40.50.10800:FF:000001">
    <property type="entry name" value="Quinolinate synthase A"/>
    <property type="match status" value="1"/>
</dbReference>
<dbReference type="Gene3D" id="3.40.50.10800">
    <property type="entry name" value="NadA-like"/>
    <property type="match status" value="3"/>
</dbReference>
<dbReference type="HAMAP" id="MF_00568">
    <property type="entry name" value="NadA_type2"/>
    <property type="match status" value="1"/>
</dbReference>
<dbReference type="InterPro" id="IPR003473">
    <property type="entry name" value="NadA"/>
</dbReference>
<dbReference type="InterPro" id="IPR036094">
    <property type="entry name" value="NadA_sf"/>
</dbReference>
<dbReference type="InterPro" id="IPR023066">
    <property type="entry name" value="Quinolinate_synth_type2"/>
</dbReference>
<dbReference type="NCBIfam" id="TIGR00550">
    <property type="entry name" value="nadA"/>
    <property type="match status" value="1"/>
</dbReference>
<dbReference type="NCBIfam" id="NF006878">
    <property type="entry name" value="PRK09375.1-2"/>
    <property type="match status" value="1"/>
</dbReference>
<dbReference type="NCBIfam" id="NF006879">
    <property type="entry name" value="PRK09375.1-4"/>
    <property type="match status" value="1"/>
</dbReference>
<dbReference type="PANTHER" id="PTHR30573:SF0">
    <property type="entry name" value="QUINOLINATE SYNTHASE, CHLOROPLASTIC"/>
    <property type="match status" value="1"/>
</dbReference>
<dbReference type="PANTHER" id="PTHR30573">
    <property type="entry name" value="QUINOLINATE SYNTHETASE A"/>
    <property type="match status" value="1"/>
</dbReference>
<dbReference type="Pfam" id="PF02445">
    <property type="entry name" value="NadA"/>
    <property type="match status" value="1"/>
</dbReference>
<dbReference type="SUPFAM" id="SSF142754">
    <property type="entry name" value="NadA-like"/>
    <property type="match status" value="1"/>
</dbReference>
<sequence>MVNRTVEEILALKKQRNAIILAHNYQREEVQEIADFVGDSLELSRQATKVDCDVIVFCGVHFMAETAAILNPDKTVLLPEIDAGCPMADTVDVEELKRWIDRYPYAPIVSYVNTTAEVKALSYACCTSANAPQIVKAVPFSSIIFVPDKNLADWVKKHVPEKDIIAWNGFCPTHHMIKKEDIIRAKKAHPDALVVVHPECRPEVIELADHVASTSGMVRFARAASQKEFIIGTEVGLLYRLKKENPDKVFYPIKKTMICPNMKITTLESILTALKENQYVIKVPEDIRIKAYEAVQRMLTLIS</sequence>
<keyword id="KW-0004">4Fe-4S</keyword>
<keyword id="KW-0963">Cytoplasm</keyword>
<keyword id="KW-0408">Iron</keyword>
<keyword id="KW-0411">Iron-sulfur</keyword>
<keyword id="KW-0479">Metal-binding</keyword>
<keyword id="KW-0662">Pyridine nucleotide biosynthesis</keyword>
<keyword id="KW-1185">Reference proteome</keyword>
<keyword id="KW-0808">Transferase</keyword>
<name>NADA_THEYD</name>
<protein>
    <recommendedName>
        <fullName evidence="1">Quinolinate synthase</fullName>
        <ecNumber evidence="1">2.5.1.72</ecNumber>
    </recommendedName>
</protein>
<gene>
    <name evidence="1" type="primary">nadA</name>
    <name type="ordered locus">THEYE_A0564</name>
</gene>
<feature type="chain" id="PRO_1000129448" description="Quinolinate synthase">
    <location>
        <begin position="1"/>
        <end position="303"/>
    </location>
</feature>
<feature type="binding site" evidence="1">
    <location>
        <position position="23"/>
    </location>
    <ligand>
        <name>iminosuccinate</name>
        <dbReference type="ChEBI" id="CHEBI:77875"/>
    </ligand>
</feature>
<feature type="binding site" evidence="1">
    <location>
        <position position="40"/>
    </location>
    <ligand>
        <name>iminosuccinate</name>
        <dbReference type="ChEBI" id="CHEBI:77875"/>
    </ligand>
</feature>
<feature type="binding site" evidence="1">
    <location>
        <position position="85"/>
    </location>
    <ligand>
        <name>[4Fe-4S] cluster</name>
        <dbReference type="ChEBI" id="CHEBI:49883"/>
    </ligand>
</feature>
<feature type="binding site" evidence="1">
    <location>
        <begin position="111"/>
        <end position="113"/>
    </location>
    <ligand>
        <name>iminosuccinate</name>
        <dbReference type="ChEBI" id="CHEBI:77875"/>
    </ligand>
</feature>
<feature type="binding site" evidence="1">
    <location>
        <position position="128"/>
    </location>
    <ligand>
        <name>iminosuccinate</name>
        <dbReference type="ChEBI" id="CHEBI:77875"/>
    </ligand>
</feature>
<feature type="binding site" evidence="1">
    <location>
        <position position="171"/>
    </location>
    <ligand>
        <name>[4Fe-4S] cluster</name>
        <dbReference type="ChEBI" id="CHEBI:49883"/>
    </ligand>
</feature>
<feature type="binding site" evidence="1">
    <location>
        <begin position="197"/>
        <end position="199"/>
    </location>
    <ligand>
        <name>iminosuccinate</name>
        <dbReference type="ChEBI" id="CHEBI:77875"/>
    </ligand>
</feature>
<feature type="binding site" evidence="1">
    <location>
        <position position="214"/>
    </location>
    <ligand>
        <name>iminosuccinate</name>
        <dbReference type="ChEBI" id="CHEBI:77875"/>
    </ligand>
</feature>
<feature type="binding site" evidence="1">
    <location>
        <position position="259"/>
    </location>
    <ligand>
        <name>[4Fe-4S] cluster</name>
        <dbReference type="ChEBI" id="CHEBI:49883"/>
    </ligand>
</feature>